<name>PSPE_DICDI</name>
<protein>
    <recommendedName>
        <fullName>Prespore-specific protein E</fullName>
    </recommendedName>
    <alternativeName>
        <fullName>Protein 1I</fullName>
    </alternativeName>
</protein>
<sequence>MRFISIFLIIVALCVSSSWAFNFTDQPNSFRISGTGCGSGTTTVYFSTDGRCNSACGGSIRIKGEGNNVPNQQFTLNDYSKNVTNCSGTSNVASFRCPALVNTTSPTFTVNVGNSAYHVTCQYAQVTETPAGNSADKVAVGIAIIFGALISLLAL</sequence>
<comment type="subcellular location">
    <subcellularLocation>
        <location>Cell membrane</location>
        <topology>Lipid-anchor</topology>
        <topology>GPI-anchor</topology>
    </subcellularLocation>
</comment>
<comment type="developmental stage">
    <text evidence="2">Expressed in the prespore cells at culminating stage.</text>
</comment>
<comment type="PTM">
    <text>The GPI-like-anchor contains a phosphoceramide group, rather than a phosphatidyl group.</text>
</comment>
<comment type="caution">
    <text evidence="3">The Dictyosteliida are known to produce a glycosylsphingolipidinositol anchor (GPI-like-anchor). It has not been established whether Dictyosteliida make a glycosylphosphatidylinositol anchor (GPI-anchor) also, and whether their GPI-like-anchor modifications can be interconverted with GPI-anchor modifications in a resculpting process. It has not been established that the GPI-like-anchor modification in Dictyosteliida utilizes the same sequence motif.</text>
</comment>
<organism>
    <name type="scientific">Dictyostelium discoideum</name>
    <name type="common">Social amoeba</name>
    <dbReference type="NCBI Taxonomy" id="44689"/>
    <lineage>
        <taxon>Eukaryota</taxon>
        <taxon>Amoebozoa</taxon>
        <taxon>Evosea</taxon>
        <taxon>Eumycetozoa</taxon>
        <taxon>Dictyostelia</taxon>
        <taxon>Dictyosteliales</taxon>
        <taxon>Dictyosteliaceae</taxon>
        <taxon>Dictyostelium</taxon>
    </lineage>
</organism>
<dbReference type="EMBL" id="AJ292240">
    <property type="protein sequence ID" value="CAC21551.1"/>
    <property type="molecule type" value="mRNA"/>
</dbReference>
<dbReference type="EMBL" id="AAFI02000092">
    <property type="protein sequence ID" value="EAL63950.1"/>
    <property type="molecule type" value="Genomic_DNA"/>
</dbReference>
<dbReference type="RefSeq" id="XP_637462.1">
    <property type="nucleotide sequence ID" value="XM_632370.1"/>
</dbReference>
<dbReference type="SMR" id="Q9GP84"/>
<dbReference type="FunCoup" id="Q9GP84">
    <property type="interactions" value="655"/>
</dbReference>
<dbReference type="STRING" id="44689.Q9GP84"/>
<dbReference type="GlyCosmos" id="Q9GP84">
    <property type="glycosylation" value="5 sites, No reported glycans"/>
</dbReference>
<dbReference type="GlyGen" id="Q9GP84">
    <property type="glycosylation" value="5 sites"/>
</dbReference>
<dbReference type="PaxDb" id="44689-DDB0191248"/>
<dbReference type="EnsemblProtists" id="EAL63950">
    <property type="protein sequence ID" value="EAL63950"/>
    <property type="gene ID" value="DDB_G0286905"/>
</dbReference>
<dbReference type="GeneID" id="8625861"/>
<dbReference type="KEGG" id="ddi:DDB_G0286905"/>
<dbReference type="dictyBase" id="DDB_G0286905">
    <property type="gene designation" value="pspE"/>
</dbReference>
<dbReference type="VEuPathDB" id="AmoebaDB:DDB_G0286905"/>
<dbReference type="HOGENOM" id="CLU_1698779_0_0_1"/>
<dbReference type="InParanoid" id="Q9GP84"/>
<dbReference type="OMA" id="GFIFTEY"/>
<dbReference type="PRO" id="PR:Q9GP84"/>
<dbReference type="Proteomes" id="UP000002195">
    <property type="component" value="Chromosome 4"/>
</dbReference>
<dbReference type="GO" id="GO:0009986">
    <property type="term" value="C:cell surface"/>
    <property type="evidence" value="ECO:0000304"/>
    <property type="project" value="dictyBase"/>
</dbReference>
<dbReference type="GO" id="GO:0005886">
    <property type="term" value="C:plasma membrane"/>
    <property type="evidence" value="ECO:0007669"/>
    <property type="project" value="UniProtKB-SubCell"/>
</dbReference>
<dbReference type="GO" id="GO:0098552">
    <property type="term" value="C:side of membrane"/>
    <property type="evidence" value="ECO:0007669"/>
    <property type="project" value="UniProtKB-KW"/>
</dbReference>
<keyword id="KW-1003">Cell membrane</keyword>
<keyword id="KW-0325">Glycoprotein</keyword>
<keyword id="KW-0336">GPI-anchor</keyword>
<keyword id="KW-0449">Lipoprotein</keyword>
<keyword id="KW-0472">Membrane</keyword>
<keyword id="KW-1185">Reference proteome</keyword>
<keyword id="KW-0732">Signal</keyword>
<gene>
    <name type="primary">pspE</name>
    <name type="ORF">DDB_G0286905</name>
</gene>
<reference key="1">
    <citation type="journal article" date="2001" name="Biochim. Biophys. Acta">
        <title>The carboxyl terminus of Dictyostelium discoideum protein 1I encodes a functional glycosyl-phosphatidylinositol signal sequence.</title>
        <authorList>
            <person name="Stevens B.A."/>
            <person name="White I.J."/>
            <person name="Hames B.D."/>
            <person name="Hooper N.M."/>
        </authorList>
    </citation>
    <scope>NUCLEOTIDE SEQUENCE [MRNA]</scope>
    <scope>DEVELOPMENTAL STAGE</scope>
    <scope>GPI-ANCHOR AT ASN-133</scope>
</reference>
<reference key="2">
    <citation type="journal article" date="2005" name="Nature">
        <title>The genome of the social amoeba Dictyostelium discoideum.</title>
        <authorList>
            <person name="Eichinger L."/>
            <person name="Pachebat J.A."/>
            <person name="Gloeckner G."/>
            <person name="Rajandream M.A."/>
            <person name="Sucgang R."/>
            <person name="Berriman M."/>
            <person name="Song J."/>
            <person name="Olsen R."/>
            <person name="Szafranski K."/>
            <person name="Xu Q."/>
            <person name="Tunggal B."/>
            <person name="Kummerfeld S."/>
            <person name="Madera M."/>
            <person name="Konfortov B.A."/>
            <person name="Rivero F."/>
            <person name="Bankier A.T."/>
            <person name="Lehmann R."/>
            <person name="Hamlin N."/>
            <person name="Davies R."/>
            <person name="Gaudet P."/>
            <person name="Fey P."/>
            <person name="Pilcher K."/>
            <person name="Chen G."/>
            <person name="Saunders D."/>
            <person name="Sodergren E.J."/>
            <person name="Davis P."/>
            <person name="Kerhornou A."/>
            <person name="Nie X."/>
            <person name="Hall N."/>
            <person name="Anjard C."/>
            <person name="Hemphill L."/>
            <person name="Bason N."/>
            <person name="Farbrother P."/>
            <person name="Desany B."/>
            <person name="Just E."/>
            <person name="Morio T."/>
            <person name="Rost R."/>
            <person name="Churcher C.M."/>
            <person name="Cooper J."/>
            <person name="Haydock S."/>
            <person name="van Driessche N."/>
            <person name="Cronin A."/>
            <person name="Goodhead I."/>
            <person name="Muzny D.M."/>
            <person name="Mourier T."/>
            <person name="Pain A."/>
            <person name="Lu M."/>
            <person name="Harper D."/>
            <person name="Lindsay R."/>
            <person name="Hauser H."/>
            <person name="James K.D."/>
            <person name="Quiles M."/>
            <person name="Madan Babu M."/>
            <person name="Saito T."/>
            <person name="Buchrieser C."/>
            <person name="Wardroper A."/>
            <person name="Felder M."/>
            <person name="Thangavelu M."/>
            <person name="Johnson D."/>
            <person name="Knights A."/>
            <person name="Loulseged H."/>
            <person name="Mungall K.L."/>
            <person name="Oliver K."/>
            <person name="Price C."/>
            <person name="Quail M.A."/>
            <person name="Urushihara H."/>
            <person name="Hernandez J."/>
            <person name="Rabbinowitsch E."/>
            <person name="Steffen D."/>
            <person name="Sanders M."/>
            <person name="Ma J."/>
            <person name="Kohara Y."/>
            <person name="Sharp S."/>
            <person name="Simmonds M.N."/>
            <person name="Spiegler S."/>
            <person name="Tivey A."/>
            <person name="Sugano S."/>
            <person name="White B."/>
            <person name="Walker D."/>
            <person name="Woodward J.R."/>
            <person name="Winckler T."/>
            <person name="Tanaka Y."/>
            <person name="Shaulsky G."/>
            <person name="Schleicher M."/>
            <person name="Weinstock G.M."/>
            <person name="Rosenthal A."/>
            <person name="Cox E.C."/>
            <person name="Chisholm R.L."/>
            <person name="Gibbs R.A."/>
            <person name="Loomis W.F."/>
            <person name="Platzer M."/>
            <person name="Kay R.R."/>
            <person name="Williams J.G."/>
            <person name="Dear P.H."/>
            <person name="Noegel A.A."/>
            <person name="Barrell B.G."/>
            <person name="Kuspa A."/>
        </authorList>
    </citation>
    <scope>NUCLEOTIDE SEQUENCE [LARGE SCALE GENOMIC DNA]</scope>
    <source>
        <strain>AX4</strain>
    </source>
</reference>
<proteinExistence type="evidence at protein level"/>
<feature type="signal peptide" evidence="1">
    <location>
        <begin position="1"/>
        <end position="20"/>
    </location>
</feature>
<feature type="chain" id="PRO_0000327478" description="Prespore-specific protein E">
    <location>
        <begin position="21"/>
        <end position="133"/>
    </location>
</feature>
<feature type="propeptide" id="PRO_0000327479" description="Removed in mature form">
    <location>
        <begin position="134"/>
        <end position="155"/>
    </location>
</feature>
<feature type="lipid moiety-binding region" description="GPI-like-anchor amidated asparagine" evidence="2">
    <location>
        <position position="133"/>
    </location>
</feature>
<feature type="glycosylation site" description="N-linked (GlcNAc...) asparagine" evidence="1">
    <location>
        <position position="22"/>
    </location>
</feature>
<feature type="glycosylation site" description="N-linked (GlcNAc...) asparagine" evidence="1">
    <location>
        <position position="82"/>
    </location>
</feature>
<feature type="glycosylation site" description="N-linked (GlcNAc...) asparagine" evidence="1">
    <location>
        <position position="85"/>
    </location>
</feature>
<feature type="glycosylation site" description="N-linked (GlcNAc...) asparagine" evidence="1">
    <location>
        <position position="102"/>
    </location>
</feature>
<feature type="glycosylation site" description="O-linked (GlcNAc) serine" evidence="1">
    <location>
        <position position="105"/>
    </location>
</feature>
<evidence type="ECO:0000255" key="1"/>
<evidence type="ECO:0000269" key="2">
    <source>
    </source>
</evidence>
<evidence type="ECO:0000305" key="3"/>
<accession>Q9GP84</accession>
<accession>Q54L41</accession>